<proteinExistence type="inferred from homology"/>
<protein>
    <recommendedName>
        <fullName evidence="1">Argininosuccinate synthase</fullName>
        <ecNumber evidence="1">6.3.4.5</ecNumber>
    </recommendedName>
    <alternativeName>
        <fullName evidence="1">Citrulline--aspartate ligase</fullName>
    </alternativeName>
</protein>
<keyword id="KW-0028">Amino-acid biosynthesis</keyword>
<keyword id="KW-0055">Arginine biosynthesis</keyword>
<keyword id="KW-0067">ATP-binding</keyword>
<keyword id="KW-0963">Cytoplasm</keyword>
<keyword id="KW-0436">Ligase</keyword>
<keyword id="KW-0547">Nucleotide-binding</keyword>
<keyword id="KW-1185">Reference proteome</keyword>
<name>ASSY_DELAS</name>
<sequence length="444" mass="49011">METILQNVPVGQKVGIAFSGGLDTSAALRWMKNKGALPYAYTANLGQPDEADYDEIPRKAMEYGAEQARLIDCRSQLAGEGIAAIQAGAFHISTGGITYFNTTPLGRAVTGTMLVAAMKEDDVNIWGDGSTFKGNDIERFYRYGLLTNPALKIYKPWLDQTFIDELGGRAEMSAFMTKEGFGYKMSAEKAYSTDSNMLGATHEAKDLEFLNSGIRIVNPIMGVAFWKPEVEVKAEEVSVTFDEGRPVAINGKEIADPVELFLEANRIGGRHGLGMSDQIENRIIEAKSRGIYEAPGMALLHIAYERLVTGIHNEDTIEQYRINGLRLGRLLYQGRWFDPQAIMLRETAQRWVARAVTGTVTLELRRGNDYSILNTESPNLTYAPERLSMEKVEDAPFSPADRIGQLTMRNLDLMDTRDKLAIYAKAGLLSLGTSTALPQLGGKE</sequence>
<dbReference type="EC" id="6.3.4.5" evidence="1"/>
<dbReference type="EMBL" id="CP000884">
    <property type="protein sequence ID" value="ABX37405.1"/>
    <property type="molecule type" value="Genomic_DNA"/>
</dbReference>
<dbReference type="RefSeq" id="WP_012206575.1">
    <property type="nucleotide sequence ID" value="NC_010002.1"/>
</dbReference>
<dbReference type="SMR" id="A9BM60"/>
<dbReference type="STRING" id="398578.Daci_4776"/>
<dbReference type="GeneID" id="24116804"/>
<dbReference type="KEGG" id="dac:Daci_4776"/>
<dbReference type="eggNOG" id="COG0137">
    <property type="taxonomic scope" value="Bacteria"/>
</dbReference>
<dbReference type="HOGENOM" id="CLU_032784_4_1_4"/>
<dbReference type="UniPathway" id="UPA00068">
    <property type="reaction ID" value="UER00113"/>
</dbReference>
<dbReference type="Proteomes" id="UP000000784">
    <property type="component" value="Chromosome"/>
</dbReference>
<dbReference type="GO" id="GO:0005737">
    <property type="term" value="C:cytoplasm"/>
    <property type="evidence" value="ECO:0007669"/>
    <property type="project" value="UniProtKB-SubCell"/>
</dbReference>
<dbReference type="GO" id="GO:0004055">
    <property type="term" value="F:argininosuccinate synthase activity"/>
    <property type="evidence" value="ECO:0007669"/>
    <property type="project" value="UniProtKB-UniRule"/>
</dbReference>
<dbReference type="GO" id="GO:0005524">
    <property type="term" value="F:ATP binding"/>
    <property type="evidence" value="ECO:0007669"/>
    <property type="project" value="UniProtKB-UniRule"/>
</dbReference>
<dbReference type="GO" id="GO:0042803">
    <property type="term" value="F:protein homodimerization activity"/>
    <property type="evidence" value="ECO:0007669"/>
    <property type="project" value="InterPro"/>
</dbReference>
<dbReference type="GO" id="GO:0000053">
    <property type="term" value="P:argininosuccinate metabolic process"/>
    <property type="evidence" value="ECO:0007669"/>
    <property type="project" value="TreeGrafter"/>
</dbReference>
<dbReference type="GO" id="GO:0006526">
    <property type="term" value="P:L-arginine biosynthetic process"/>
    <property type="evidence" value="ECO:0007669"/>
    <property type="project" value="UniProtKB-UniRule"/>
</dbReference>
<dbReference type="GO" id="GO:0000050">
    <property type="term" value="P:urea cycle"/>
    <property type="evidence" value="ECO:0007669"/>
    <property type="project" value="TreeGrafter"/>
</dbReference>
<dbReference type="CDD" id="cd01999">
    <property type="entry name" value="ASS"/>
    <property type="match status" value="1"/>
</dbReference>
<dbReference type="FunFam" id="1.10.287.400:FF:000001">
    <property type="entry name" value="Argininosuccinate synthase"/>
    <property type="match status" value="1"/>
</dbReference>
<dbReference type="Gene3D" id="1.10.287.400">
    <property type="match status" value="1"/>
</dbReference>
<dbReference type="Gene3D" id="3.90.1260.10">
    <property type="entry name" value="Argininosuccinate synthetase, chain A, domain 2"/>
    <property type="match status" value="1"/>
</dbReference>
<dbReference type="Gene3D" id="3.40.50.620">
    <property type="entry name" value="HUPs"/>
    <property type="match status" value="1"/>
</dbReference>
<dbReference type="HAMAP" id="MF_00581">
    <property type="entry name" value="Arg_succ_synth_type2"/>
    <property type="match status" value="1"/>
</dbReference>
<dbReference type="InterPro" id="IPR023437">
    <property type="entry name" value="Arg_succ_synth_type2_subfam"/>
</dbReference>
<dbReference type="InterPro" id="IPR048268">
    <property type="entry name" value="Arginosuc_syn_C"/>
</dbReference>
<dbReference type="InterPro" id="IPR048267">
    <property type="entry name" value="Arginosuc_syn_N"/>
</dbReference>
<dbReference type="InterPro" id="IPR001518">
    <property type="entry name" value="Arginosuc_synth"/>
</dbReference>
<dbReference type="InterPro" id="IPR018223">
    <property type="entry name" value="Arginosuc_synth_CS"/>
</dbReference>
<dbReference type="InterPro" id="IPR023434">
    <property type="entry name" value="Arginosuc_synth_type_1_subfam"/>
</dbReference>
<dbReference type="InterPro" id="IPR024074">
    <property type="entry name" value="AS_cat/multimer_dom_body"/>
</dbReference>
<dbReference type="InterPro" id="IPR024073">
    <property type="entry name" value="AS_multimer_C_tail"/>
</dbReference>
<dbReference type="InterPro" id="IPR014729">
    <property type="entry name" value="Rossmann-like_a/b/a_fold"/>
</dbReference>
<dbReference type="NCBIfam" id="TIGR00032">
    <property type="entry name" value="argG"/>
    <property type="match status" value="1"/>
</dbReference>
<dbReference type="NCBIfam" id="NF003779">
    <property type="entry name" value="PRK05370.1"/>
    <property type="match status" value="1"/>
</dbReference>
<dbReference type="PANTHER" id="PTHR11587">
    <property type="entry name" value="ARGININOSUCCINATE SYNTHASE"/>
    <property type="match status" value="1"/>
</dbReference>
<dbReference type="PANTHER" id="PTHR11587:SF2">
    <property type="entry name" value="ARGININOSUCCINATE SYNTHASE"/>
    <property type="match status" value="1"/>
</dbReference>
<dbReference type="Pfam" id="PF20979">
    <property type="entry name" value="Arginosuc_syn_C"/>
    <property type="match status" value="1"/>
</dbReference>
<dbReference type="Pfam" id="PF00764">
    <property type="entry name" value="Arginosuc_synth"/>
    <property type="match status" value="1"/>
</dbReference>
<dbReference type="SUPFAM" id="SSF52402">
    <property type="entry name" value="Adenine nucleotide alpha hydrolases-like"/>
    <property type="match status" value="1"/>
</dbReference>
<dbReference type="SUPFAM" id="SSF69864">
    <property type="entry name" value="Argininosuccinate synthetase, C-terminal domain"/>
    <property type="match status" value="1"/>
</dbReference>
<dbReference type="PROSITE" id="PS00564">
    <property type="entry name" value="ARGININOSUCCIN_SYN_1"/>
    <property type="match status" value="1"/>
</dbReference>
<dbReference type="PROSITE" id="PS00565">
    <property type="entry name" value="ARGININOSUCCIN_SYN_2"/>
    <property type="match status" value="1"/>
</dbReference>
<evidence type="ECO:0000255" key="1">
    <source>
        <dbReference type="HAMAP-Rule" id="MF_00581"/>
    </source>
</evidence>
<comment type="catalytic activity">
    <reaction evidence="1">
        <text>L-citrulline + L-aspartate + ATP = 2-(N(omega)-L-arginino)succinate + AMP + diphosphate + H(+)</text>
        <dbReference type="Rhea" id="RHEA:10932"/>
        <dbReference type="ChEBI" id="CHEBI:15378"/>
        <dbReference type="ChEBI" id="CHEBI:29991"/>
        <dbReference type="ChEBI" id="CHEBI:30616"/>
        <dbReference type="ChEBI" id="CHEBI:33019"/>
        <dbReference type="ChEBI" id="CHEBI:57472"/>
        <dbReference type="ChEBI" id="CHEBI:57743"/>
        <dbReference type="ChEBI" id="CHEBI:456215"/>
        <dbReference type="EC" id="6.3.4.5"/>
    </reaction>
</comment>
<comment type="pathway">
    <text evidence="1">Amino-acid biosynthesis; L-arginine biosynthesis; L-arginine from L-ornithine and carbamoyl phosphate: step 2/3.</text>
</comment>
<comment type="subunit">
    <text evidence="1">Homotetramer.</text>
</comment>
<comment type="subcellular location">
    <subcellularLocation>
        <location evidence="1">Cytoplasm</location>
    </subcellularLocation>
</comment>
<comment type="similarity">
    <text evidence="1">Belongs to the argininosuccinate synthase family. Type 2 subfamily.</text>
</comment>
<accession>A9BM60</accession>
<organism>
    <name type="scientific">Delftia acidovorans (strain DSM 14801 / SPH-1)</name>
    <dbReference type="NCBI Taxonomy" id="398578"/>
    <lineage>
        <taxon>Bacteria</taxon>
        <taxon>Pseudomonadati</taxon>
        <taxon>Pseudomonadota</taxon>
        <taxon>Betaproteobacteria</taxon>
        <taxon>Burkholderiales</taxon>
        <taxon>Comamonadaceae</taxon>
        <taxon>Delftia</taxon>
    </lineage>
</organism>
<feature type="chain" id="PRO_1000129744" description="Argininosuccinate synthase">
    <location>
        <begin position="1"/>
        <end position="444"/>
    </location>
</feature>
<feature type="binding site" evidence="1">
    <location>
        <begin position="17"/>
        <end position="25"/>
    </location>
    <ligand>
        <name>ATP</name>
        <dbReference type="ChEBI" id="CHEBI:30616"/>
    </ligand>
</feature>
<feature type="binding site" evidence="1">
    <location>
        <position position="43"/>
    </location>
    <ligand>
        <name>ATP</name>
        <dbReference type="ChEBI" id="CHEBI:30616"/>
    </ligand>
</feature>
<feature type="binding site" evidence="1">
    <location>
        <position position="99"/>
    </location>
    <ligand>
        <name>L-citrulline</name>
        <dbReference type="ChEBI" id="CHEBI:57743"/>
    </ligand>
</feature>
<feature type="binding site" evidence="1">
    <location>
        <position position="129"/>
    </location>
    <ligand>
        <name>ATP</name>
        <dbReference type="ChEBI" id="CHEBI:30616"/>
    </ligand>
</feature>
<feature type="binding site" evidence="1">
    <location>
        <position position="131"/>
    </location>
    <ligand>
        <name>ATP</name>
        <dbReference type="ChEBI" id="CHEBI:30616"/>
    </ligand>
</feature>
<feature type="binding site" evidence="1">
    <location>
        <position position="131"/>
    </location>
    <ligand>
        <name>L-aspartate</name>
        <dbReference type="ChEBI" id="CHEBI:29991"/>
    </ligand>
</feature>
<feature type="binding site" evidence="1">
    <location>
        <position position="135"/>
    </location>
    <ligand>
        <name>L-aspartate</name>
        <dbReference type="ChEBI" id="CHEBI:29991"/>
    </ligand>
</feature>
<feature type="binding site" evidence="1">
    <location>
        <position position="135"/>
    </location>
    <ligand>
        <name>L-citrulline</name>
        <dbReference type="ChEBI" id="CHEBI:57743"/>
    </ligand>
</feature>
<feature type="binding site" evidence="1">
    <location>
        <position position="136"/>
    </location>
    <ligand>
        <name>ATP</name>
        <dbReference type="ChEBI" id="CHEBI:30616"/>
    </ligand>
</feature>
<feature type="binding site" evidence="1">
    <location>
        <position position="136"/>
    </location>
    <ligand>
        <name>L-aspartate</name>
        <dbReference type="ChEBI" id="CHEBI:29991"/>
    </ligand>
</feature>
<feature type="binding site" evidence="1">
    <location>
        <position position="139"/>
    </location>
    <ligand>
        <name>L-citrulline</name>
        <dbReference type="ChEBI" id="CHEBI:57743"/>
    </ligand>
</feature>
<feature type="binding site" evidence="1">
    <location>
        <position position="192"/>
    </location>
    <ligand>
        <name>L-citrulline</name>
        <dbReference type="ChEBI" id="CHEBI:57743"/>
    </ligand>
</feature>
<feature type="binding site" evidence="1">
    <location>
        <position position="194"/>
    </location>
    <ligand>
        <name>ATP</name>
        <dbReference type="ChEBI" id="CHEBI:30616"/>
    </ligand>
</feature>
<feature type="binding site" evidence="1">
    <location>
        <position position="201"/>
    </location>
    <ligand>
        <name>L-citrulline</name>
        <dbReference type="ChEBI" id="CHEBI:57743"/>
    </ligand>
</feature>
<feature type="binding site" evidence="1">
    <location>
        <position position="203"/>
    </location>
    <ligand>
        <name>L-citrulline</name>
        <dbReference type="ChEBI" id="CHEBI:57743"/>
    </ligand>
</feature>
<feature type="binding site" evidence="1">
    <location>
        <position position="280"/>
    </location>
    <ligand>
        <name>L-citrulline</name>
        <dbReference type="ChEBI" id="CHEBI:57743"/>
    </ligand>
</feature>
<gene>
    <name evidence="1" type="primary">argG</name>
    <name type="ordered locus">Daci_4776</name>
</gene>
<reference key="1">
    <citation type="submission" date="2007-11" db="EMBL/GenBank/DDBJ databases">
        <title>Complete sequence of Delftia acidovorans DSM 14801 / SPH-1.</title>
        <authorList>
            <person name="Copeland A."/>
            <person name="Lucas S."/>
            <person name="Lapidus A."/>
            <person name="Barry K."/>
            <person name="Glavina del Rio T."/>
            <person name="Dalin E."/>
            <person name="Tice H."/>
            <person name="Pitluck S."/>
            <person name="Lowry S."/>
            <person name="Clum A."/>
            <person name="Schmutz J."/>
            <person name="Larimer F."/>
            <person name="Land M."/>
            <person name="Hauser L."/>
            <person name="Kyrpides N."/>
            <person name="Kim E."/>
            <person name="Schleheck D."/>
            <person name="Richardson P."/>
        </authorList>
    </citation>
    <scope>NUCLEOTIDE SEQUENCE [LARGE SCALE GENOMIC DNA]</scope>
    <source>
        <strain>DSM 14801 / SPH-1</strain>
    </source>
</reference>